<sequence length="479" mass="53179">MAQHTVYFPDAFLTQMREAMPSTLSFDDFLAACQRPLRRSIRVNTLKISVADFLQLTAPYGWTLTPIPWCEEGFWIERDNEDALPLGSTAEHLSGLFYIQEASSMLPVAALFADGNAPQRVMDVAAAPGSKTTQISARMNNEGAILANEFSASRVKVLHANISRCGISNVALTHFDGRVFGAAVPEMFDAILLDAPCSGEGVVRKDPDALKNWSPESNQEIAATQRELIDSAFHALRPGGTLVYSTCTLNQEENEAVCLWLKETYPDAVEFLPLGDLFPGANKALTEEGFLHVFPQIYDCEGFFVARLRKTQAIPALPAPKYKVGNFPFSPVKDREAGQIRQAAAGVGLNWDENLRLWQRDKELWLFPVGIEALIGKVRFSRLGIKLAETHNKGYRWQHEAVIALATPDNVNAFELTPQEAEEWYRGRDVYPQAAPVADDVLVTFQHQPIGLAKRIGSRLKNSYPRELVRDGKLFTGNA</sequence>
<feature type="chain" id="PRO_0000285021" description="Ribosomal RNA small subunit methyltransferase F">
    <location>
        <begin position="1"/>
        <end position="479"/>
    </location>
</feature>
<feature type="active site" description="Nucleophile" evidence="1">
    <location>
        <position position="247"/>
    </location>
</feature>
<feature type="binding site" evidence="1">
    <location>
        <begin position="125"/>
        <end position="131"/>
    </location>
    <ligand>
        <name>S-adenosyl-L-methionine</name>
        <dbReference type="ChEBI" id="CHEBI:59789"/>
    </ligand>
</feature>
<feature type="binding site" evidence="1">
    <location>
        <position position="149"/>
    </location>
    <ligand>
        <name>S-adenosyl-L-methionine</name>
        <dbReference type="ChEBI" id="CHEBI:59789"/>
    </ligand>
</feature>
<feature type="binding site" evidence="1">
    <location>
        <position position="176"/>
    </location>
    <ligand>
        <name>S-adenosyl-L-methionine</name>
        <dbReference type="ChEBI" id="CHEBI:59789"/>
    </ligand>
</feature>
<feature type="binding site" evidence="1">
    <location>
        <position position="194"/>
    </location>
    <ligand>
        <name>S-adenosyl-L-methionine</name>
        <dbReference type="ChEBI" id="CHEBI:59789"/>
    </ligand>
</feature>
<gene>
    <name evidence="1" type="primary">rsmF</name>
    <name type="ordered locus">SSON_1326</name>
</gene>
<accession>Q3Z2H4</accession>
<keyword id="KW-0963">Cytoplasm</keyword>
<keyword id="KW-0489">Methyltransferase</keyword>
<keyword id="KW-1185">Reference proteome</keyword>
<keyword id="KW-0694">RNA-binding</keyword>
<keyword id="KW-0698">rRNA processing</keyword>
<keyword id="KW-0949">S-adenosyl-L-methionine</keyword>
<keyword id="KW-0808">Transferase</keyword>
<proteinExistence type="inferred from homology"/>
<protein>
    <recommendedName>
        <fullName evidence="1">Ribosomal RNA small subunit methyltransferase F</fullName>
        <ecNumber evidence="1">2.1.1.178</ecNumber>
    </recommendedName>
    <alternativeName>
        <fullName evidence="1">16S rRNA m5C1407 methyltransferase</fullName>
    </alternativeName>
    <alternativeName>
        <fullName evidence="1">rRNA (cytosine-C(5)-)-methyltransferase RsmF</fullName>
    </alternativeName>
</protein>
<comment type="function">
    <text evidence="1">Specifically methylates the cytosine at position 1407 (m5C1407) of 16S rRNA.</text>
</comment>
<comment type="catalytic activity">
    <reaction evidence="1">
        <text>cytidine(1407) in 16S rRNA + S-adenosyl-L-methionine = 5-methylcytidine(1407) in 16S rRNA + S-adenosyl-L-homocysteine + H(+)</text>
        <dbReference type="Rhea" id="RHEA:42756"/>
        <dbReference type="Rhea" id="RHEA-COMP:10223"/>
        <dbReference type="Rhea" id="RHEA-COMP:10224"/>
        <dbReference type="ChEBI" id="CHEBI:15378"/>
        <dbReference type="ChEBI" id="CHEBI:57856"/>
        <dbReference type="ChEBI" id="CHEBI:59789"/>
        <dbReference type="ChEBI" id="CHEBI:74483"/>
        <dbReference type="ChEBI" id="CHEBI:82748"/>
        <dbReference type="EC" id="2.1.1.178"/>
    </reaction>
</comment>
<comment type="subcellular location">
    <subcellularLocation>
        <location evidence="1">Cytoplasm</location>
    </subcellularLocation>
</comment>
<comment type="similarity">
    <text evidence="1">Belongs to the class I-like SAM-binding methyltransferase superfamily. RsmB/NOP family.</text>
</comment>
<comment type="sequence caution" evidence="2">
    <conflict type="erroneous initiation">
        <sequence resource="EMBL-CDS" id="AAZ88038"/>
    </conflict>
</comment>
<reference key="1">
    <citation type="journal article" date="2005" name="Nucleic Acids Res.">
        <title>Genome dynamics and diversity of Shigella species, the etiologic agents of bacillary dysentery.</title>
        <authorList>
            <person name="Yang F."/>
            <person name="Yang J."/>
            <person name="Zhang X."/>
            <person name="Chen L."/>
            <person name="Jiang Y."/>
            <person name="Yan Y."/>
            <person name="Tang X."/>
            <person name="Wang J."/>
            <person name="Xiong Z."/>
            <person name="Dong J."/>
            <person name="Xue Y."/>
            <person name="Zhu Y."/>
            <person name="Xu X."/>
            <person name="Sun L."/>
            <person name="Chen S."/>
            <person name="Nie H."/>
            <person name="Peng J."/>
            <person name="Xu J."/>
            <person name="Wang Y."/>
            <person name="Yuan Z."/>
            <person name="Wen Y."/>
            <person name="Yao Z."/>
            <person name="Shen Y."/>
            <person name="Qiang B."/>
            <person name="Hou Y."/>
            <person name="Yu J."/>
            <person name="Jin Q."/>
        </authorList>
    </citation>
    <scope>NUCLEOTIDE SEQUENCE [LARGE SCALE GENOMIC DNA]</scope>
    <source>
        <strain>Ss046</strain>
    </source>
</reference>
<organism>
    <name type="scientific">Shigella sonnei (strain Ss046)</name>
    <dbReference type="NCBI Taxonomy" id="300269"/>
    <lineage>
        <taxon>Bacteria</taxon>
        <taxon>Pseudomonadati</taxon>
        <taxon>Pseudomonadota</taxon>
        <taxon>Gammaproteobacteria</taxon>
        <taxon>Enterobacterales</taxon>
        <taxon>Enterobacteriaceae</taxon>
        <taxon>Shigella</taxon>
    </lineage>
</organism>
<dbReference type="EC" id="2.1.1.178" evidence="1"/>
<dbReference type="EMBL" id="CP000038">
    <property type="protein sequence ID" value="AAZ88038.1"/>
    <property type="status" value="ALT_INIT"/>
    <property type="molecule type" value="Genomic_DNA"/>
</dbReference>
<dbReference type="RefSeq" id="WP_005138560.1">
    <property type="nucleotide sequence ID" value="NC_007384.1"/>
</dbReference>
<dbReference type="SMR" id="Q3Z2H4"/>
<dbReference type="GeneID" id="93776085"/>
<dbReference type="KEGG" id="ssn:SSON_1326"/>
<dbReference type="HOGENOM" id="CLU_005316_6_2_6"/>
<dbReference type="Proteomes" id="UP000002529">
    <property type="component" value="Chromosome"/>
</dbReference>
<dbReference type="GO" id="GO:0005737">
    <property type="term" value="C:cytoplasm"/>
    <property type="evidence" value="ECO:0007669"/>
    <property type="project" value="UniProtKB-SubCell"/>
</dbReference>
<dbReference type="GO" id="GO:0003723">
    <property type="term" value="F:RNA binding"/>
    <property type="evidence" value="ECO:0007669"/>
    <property type="project" value="UniProtKB-KW"/>
</dbReference>
<dbReference type="GO" id="GO:0009383">
    <property type="term" value="F:rRNA (cytosine-C5-)-methyltransferase activity"/>
    <property type="evidence" value="ECO:0007669"/>
    <property type="project" value="TreeGrafter"/>
</dbReference>
<dbReference type="GO" id="GO:0070475">
    <property type="term" value="P:rRNA base methylation"/>
    <property type="evidence" value="ECO:0007669"/>
    <property type="project" value="TreeGrafter"/>
</dbReference>
<dbReference type="CDD" id="cd02440">
    <property type="entry name" value="AdoMet_MTases"/>
    <property type="match status" value="1"/>
</dbReference>
<dbReference type="FunFam" id="3.10.450.720:FF:000001">
    <property type="entry name" value="Ribosomal RNA small subunit methyltransferase F"/>
    <property type="match status" value="1"/>
</dbReference>
<dbReference type="FunFam" id="3.40.50.150:FF:000079">
    <property type="entry name" value="Ribosomal RNA small subunit methyltransferase F"/>
    <property type="match status" value="1"/>
</dbReference>
<dbReference type="Gene3D" id="3.10.450.720">
    <property type="match status" value="1"/>
</dbReference>
<dbReference type="Gene3D" id="3.40.50.150">
    <property type="entry name" value="Vaccinia Virus protein VP39"/>
    <property type="match status" value="1"/>
</dbReference>
<dbReference type="HAMAP" id="MF_01579">
    <property type="entry name" value="16SrRNA_methyltr_F"/>
    <property type="match status" value="1"/>
</dbReference>
<dbReference type="InterPro" id="IPR031341">
    <property type="entry name" value="Methyltr_RsmF_N"/>
</dbReference>
<dbReference type="InterPro" id="IPR049560">
    <property type="entry name" value="MeTrfase_RsmB-F_NOP2_cat"/>
</dbReference>
<dbReference type="InterPro" id="IPR001678">
    <property type="entry name" value="MeTrfase_RsmB-F_NOP2_dom"/>
</dbReference>
<dbReference type="InterPro" id="IPR027391">
    <property type="entry name" value="Nol1_Nop2_Fmu_2"/>
</dbReference>
<dbReference type="InterPro" id="IPR011023">
    <property type="entry name" value="Nop2p"/>
</dbReference>
<dbReference type="InterPro" id="IPR023267">
    <property type="entry name" value="RCMT"/>
</dbReference>
<dbReference type="InterPro" id="IPR023545">
    <property type="entry name" value="rRNA_ssu_MeTfrase_F"/>
</dbReference>
<dbReference type="InterPro" id="IPR018314">
    <property type="entry name" value="RsmB/NOL1/NOP2-like_CS"/>
</dbReference>
<dbReference type="InterPro" id="IPR029063">
    <property type="entry name" value="SAM-dependent_MTases_sf"/>
</dbReference>
<dbReference type="InterPro" id="IPR048457">
    <property type="entry name" value="YebU_pre-PUA_dom"/>
</dbReference>
<dbReference type="NCBIfam" id="TIGR00446">
    <property type="entry name" value="nop2p"/>
    <property type="match status" value="1"/>
</dbReference>
<dbReference type="NCBIfam" id="NF008898">
    <property type="entry name" value="PRK11933.1"/>
    <property type="match status" value="1"/>
</dbReference>
<dbReference type="PANTHER" id="PTHR22807:SF30">
    <property type="entry name" value="28S RRNA (CYTOSINE(4447)-C(5))-METHYLTRANSFERASE-RELATED"/>
    <property type="match status" value="1"/>
</dbReference>
<dbReference type="PANTHER" id="PTHR22807">
    <property type="entry name" value="NOP2 YEAST -RELATED NOL1/NOP2/FMU SUN DOMAIN-CONTAINING"/>
    <property type="match status" value="1"/>
</dbReference>
<dbReference type="Pfam" id="PF01189">
    <property type="entry name" value="Methyltr_RsmB-F"/>
    <property type="match status" value="1"/>
</dbReference>
<dbReference type="Pfam" id="PF17125">
    <property type="entry name" value="Methyltr_RsmF_N"/>
    <property type="match status" value="1"/>
</dbReference>
<dbReference type="Pfam" id="PF13636">
    <property type="entry name" value="Methyltranf_PUA"/>
    <property type="match status" value="1"/>
</dbReference>
<dbReference type="Pfam" id="PF21150">
    <property type="entry name" value="YebU_pre-PUA_dom"/>
    <property type="match status" value="1"/>
</dbReference>
<dbReference type="PRINTS" id="PR02008">
    <property type="entry name" value="RCMTFAMILY"/>
</dbReference>
<dbReference type="SUPFAM" id="SSF53335">
    <property type="entry name" value="S-adenosyl-L-methionine-dependent methyltransferases"/>
    <property type="match status" value="1"/>
</dbReference>
<dbReference type="PROSITE" id="PS01153">
    <property type="entry name" value="NOL1_NOP2_SUN"/>
    <property type="match status" value="1"/>
</dbReference>
<dbReference type="PROSITE" id="PS51686">
    <property type="entry name" value="SAM_MT_RSMB_NOP"/>
    <property type="match status" value="1"/>
</dbReference>
<evidence type="ECO:0000255" key="1">
    <source>
        <dbReference type="HAMAP-Rule" id="MF_01579"/>
    </source>
</evidence>
<evidence type="ECO:0000305" key="2"/>
<name>RSMF_SHISS</name>